<dbReference type="GO" id="GO:0042597">
    <property type="term" value="C:periplasmic space"/>
    <property type="evidence" value="ECO:0007669"/>
    <property type="project" value="UniProtKB-SubCell"/>
</dbReference>
<dbReference type="GO" id="GO:0009055">
    <property type="term" value="F:electron transfer activity"/>
    <property type="evidence" value="ECO:0007669"/>
    <property type="project" value="InterPro"/>
</dbReference>
<dbReference type="GO" id="GO:0020037">
    <property type="term" value="F:heme binding"/>
    <property type="evidence" value="ECO:0007669"/>
    <property type="project" value="InterPro"/>
</dbReference>
<dbReference type="GO" id="GO:0046872">
    <property type="term" value="F:metal ion binding"/>
    <property type="evidence" value="ECO:0007669"/>
    <property type="project" value="UniProtKB-KW"/>
</dbReference>
<dbReference type="Gene3D" id="1.10.760.10">
    <property type="entry name" value="Cytochrome c-like domain"/>
    <property type="match status" value="1"/>
</dbReference>
<dbReference type="InterPro" id="IPR036909">
    <property type="entry name" value="Cyt_c-like_dom_sf"/>
</dbReference>
<dbReference type="SUPFAM" id="SSF46626">
    <property type="entry name" value="Cytochrome c"/>
    <property type="match status" value="1"/>
</dbReference>
<name>CYC4_ALIFS</name>
<protein>
    <recommendedName>
        <fullName>Putative cytochrome c4</fullName>
    </recommendedName>
    <alternativeName>
        <fullName>Cytochrome c551</fullName>
    </alternativeName>
</protein>
<reference key="1">
    <citation type="journal article" date="1997" name="Eur. J. Biochem.">
        <title>Purification and characterization of flavoproteins and cytochromes from the yellow bioluminescence marine bacterium Vibrio fischeri strain Y1.</title>
        <authorList>
            <person name="Petushkov V.N."/>
            <person name="Lee J."/>
        </authorList>
    </citation>
    <scope>PROTEIN SEQUENCE</scope>
    <source>
        <strain>ATCC 33715 / Y-1</strain>
    </source>
</reference>
<proteinExistence type="evidence at protein level"/>
<feature type="chain" id="PRO_0000108365" description="Putative cytochrome c4">
    <location>
        <begin position="1"/>
        <end position="25" status="greater than"/>
    </location>
</feature>
<feature type="region of interest" description="Disordered" evidence="3">
    <location>
        <begin position="1"/>
        <end position="25"/>
    </location>
</feature>
<feature type="binding site" description="covalent" evidence="2">
    <location>
        <position position="14"/>
    </location>
    <ligand>
        <name>heme</name>
        <dbReference type="ChEBI" id="CHEBI:30413"/>
        <label>1</label>
    </ligand>
</feature>
<feature type="binding site" description="covalent" evidence="2">
    <location>
        <position position="17"/>
    </location>
    <ligand>
        <name>heme</name>
        <dbReference type="ChEBI" id="CHEBI:30413"/>
        <label>1</label>
    </ligand>
</feature>
<feature type="unsure residue">
    <location>
        <position position="14"/>
    </location>
</feature>
<feature type="unsure residue">
    <location>
        <position position="17"/>
    </location>
</feature>
<feature type="non-terminal residue">
    <location>
        <position position="25"/>
    </location>
</feature>
<evidence type="ECO:0000250" key="1"/>
<evidence type="ECO:0000255" key="2">
    <source>
        <dbReference type="PROSITE-ProRule" id="PRU00433"/>
    </source>
</evidence>
<evidence type="ECO:0000256" key="3">
    <source>
        <dbReference type="SAM" id="MobiDB-lite"/>
    </source>
</evidence>
<comment type="function">
    <text evidence="1">Diheme, high potential cytochrome c believed to be an intermediate electron donor to terminal oxidation systems.</text>
</comment>
<comment type="subcellular location">
    <subcellularLocation>
        <location evidence="1">Periplasm</location>
    </subcellularLocation>
</comment>
<comment type="PTM">
    <text evidence="1">Binds 2 heme groups per subunit.</text>
</comment>
<accession>P80891</accession>
<sequence>QEDIEAGKQKSATCTACHGQEGNST</sequence>
<organism>
    <name type="scientific">Aliivibrio fischeri</name>
    <name type="common">Vibrio fischeri</name>
    <dbReference type="NCBI Taxonomy" id="668"/>
    <lineage>
        <taxon>Bacteria</taxon>
        <taxon>Pseudomonadati</taxon>
        <taxon>Pseudomonadota</taxon>
        <taxon>Gammaproteobacteria</taxon>
        <taxon>Vibrionales</taxon>
        <taxon>Vibrionaceae</taxon>
        <taxon>Aliivibrio</taxon>
    </lineage>
</organism>
<keyword id="KW-0903">Direct protein sequencing</keyword>
<keyword id="KW-0249">Electron transport</keyword>
<keyword id="KW-0349">Heme</keyword>
<keyword id="KW-0408">Iron</keyword>
<keyword id="KW-0479">Metal-binding</keyword>
<keyword id="KW-0574">Periplasm</keyword>
<keyword id="KW-0813">Transport</keyword>